<keyword id="KW-0025">Alternative splicing</keyword>
<keyword id="KW-1048">Host nucleus</keyword>
<keyword id="KW-0472">Membrane</keyword>
<keyword id="KW-0694">RNA-binding</keyword>
<keyword id="KW-0468">Viral matrix protein</keyword>
<keyword id="KW-0946">Virion</keyword>
<sequence length="252" mass="27910">MSLLTEVETYVLSIVPSGPLKAEIAQRLEDVFAGKNTDLEALMEWLKTRPILSPLTKGILGFVFTLTVPSERGLQRRRFVQNALNGNGDPNNMDRAVKLYRKLKREITFHGAKEVALSYSTGALASCMGLIYNRMGTVTTEVAFGLVCATCEQIADSQHRSHRQMVTTTNPLIRHENRMVLASTTAKAMEQMAGSSEQAAEAMEVASQARQMVQAMRTIGTHPSSSAGLKDDLLENLQAYQKRMGVQMQRFK</sequence>
<organismHost>
    <name type="scientific">Aves</name>
    <dbReference type="NCBI Taxonomy" id="8782"/>
</organismHost>
<gene>
    <name evidence="1" type="primary">M</name>
</gene>
<accession>Q77W48</accession>
<dbReference type="EMBL" id="AF073197">
    <property type="protein sequence ID" value="AAD25205.1"/>
    <property type="molecule type" value="Genomic_RNA"/>
</dbReference>
<dbReference type="SMR" id="Q77W48"/>
<dbReference type="GO" id="GO:0042025">
    <property type="term" value="C:host cell nucleus"/>
    <property type="evidence" value="ECO:0007669"/>
    <property type="project" value="UniProtKB-SubCell"/>
</dbReference>
<dbReference type="GO" id="GO:0016020">
    <property type="term" value="C:membrane"/>
    <property type="evidence" value="ECO:0007669"/>
    <property type="project" value="UniProtKB-KW"/>
</dbReference>
<dbReference type="GO" id="GO:0055036">
    <property type="term" value="C:virion membrane"/>
    <property type="evidence" value="ECO:0007669"/>
    <property type="project" value="UniProtKB-SubCell"/>
</dbReference>
<dbReference type="GO" id="GO:0003723">
    <property type="term" value="F:RNA binding"/>
    <property type="evidence" value="ECO:0007669"/>
    <property type="project" value="UniProtKB-UniRule"/>
</dbReference>
<dbReference type="GO" id="GO:0039660">
    <property type="term" value="F:structural constituent of virion"/>
    <property type="evidence" value="ECO:0007669"/>
    <property type="project" value="UniProtKB-UniRule"/>
</dbReference>
<dbReference type="GO" id="GO:0046761">
    <property type="term" value="P:viral budding from plasma membrane"/>
    <property type="evidence" value="ECO:0007669"/>
    <property type="project" value="UniProtKB-UniRule"/>
</dbReference>
<dbReference type="FunFam" id="1.10.10.180:FF:000001">
    <property type="entry name" value="Matrix protein 1"/>
    <property type="match status" value="1"/>
</dbReference>
<dbReference type="FunFam" id="1.20.91.10:FF:000001">
    <property type="entry name" value="Matrix protein 1"/>
    <property type="match status" value="1"/>
</dbReference>
<dbReference type="Gene3D" id="1.10.10.180">
    <property type="match status" value="1"/>
</dbReference>
<dbReference type="Gene3D" id="1.20.91.10">
    <property type="match status" value="1"/>
</dbReference>
<dbReference type="HAMAP" id="MF_04068">
    <property type="entry name" value="INFV_M1"/>
    <property type="match status" value="1"/>
</dbReference>
<dbReference type="InterPro" id="IPR036039">
    <property type="entry name" value="Flu_matrix_M1"/>
</dbReference>
<dbReference type="InterPro" id="IPR013188">
    <property type="entry name" value="Flu_matrix_M1_C"/>
</dbReference>
<dbReference type="InterPro" id="IPR001561">
    <property type="entry name" value="Flu_matrix_M1_N"/>
</dbReference>
<dbReference type="InterPro" id="IPR015423">
    <property type="entry name" value="Flu_matrix_M1_N_sub1"/>
</dbReference>
<dbReference type="InterPro" id="IPR015799">
    <property type="entry name" value="Flu_matrix_M1_N_sub2"/>
</dbReference>
<dbReference type="InterPro" id="IPR037533">
    <property type="entry name" value="INFV_M1"/>
</dbReference>
<dbReference type="Pfam" id="PF00598">
    <property type="entry name" value="Flu_M1"/>
    <property type="match status" value="1"/>
</dbReference>
<dbReference type="Pfam" id="PF08289">
    <property type="entry name" value="Flu_M1_C"/>
    <property type="match status" value="1"/>
</dbReference>
<dbReference type="SMART" id="SM00759">
    <property type="entry name" value="Flu_M1_C"/>
    <property type="match status" value="1"/>
</dbReference>
<dbReference type="SUPFAM" id="SSF48145">
    <property type="entry name" value="Influenza virus matrix protein M1"/>
    <property type="match status" value="1"/>
</dbReference>
<protein>
    <recommendedName>
        <fullName evidence="1">Matrix protein 1</fullName>
        <shortName evidence="1">M1</shortName>
    </recommendedName>
</protein>
<name>M1_I71A2</name>
<organism>
    <name type="scientific">Influenza A virus (strain A/Turkey/Oregon/1971 H7N3)</name>
    <dbReference type="NCBI Taxonomy" id="385636"/>
    <lineage>
        <taxon>Viruses</taxon>
        <taxon>Riboviria</taxon>
        <taxon>Orthornavirae</taxon>
        <taxon>Negarnaviricota</taxon>
        <taxon>Polyploviricotina</taxon>
        <taxon>Insthoviricetes</taxon>
        <taxon>Articulavirales</taxon>
        <taxon>Orthomyxoviridae</taxon>
        <taxon>Alphainfluenzavirus</taxon>
        <taxon>Alphainfluenzavirus influenzae</taxon>
        <taxon>Influenza A virus</taxon>
    </lineage>
</organism>
<proteinExistence type="inferred from homology"/>
<feature type="chain" id="PRO_0000326293" description="Matrix protein 1">
    <location>
        <begin position="1"/>
        <end position="252"/>
    </location>
</feature>
<feature type="region of interest" description="Membrane-binding" evidence="1">
    <location>
        <begin position="1"/>
        <end position="164"/>
    </location>
</feature>
<feature type="region of interest" description="RNP-binding" evidence="1">
    <location>
        <begin position="165"/>
        <end position="252"/>
    </location>
</feature>
<feature type="short sequence motif" description="Nuclear localization signal" evidence="1">
    <location>
        <begin position="101"/>
        <end position="105"/>
    </location>
</feature>
<reference key="1">
    <citation type="journal article" date="1999" name="J. Virol.">
        <title>Phylogenetic analysis of H7 avian influenza viruses isolated from the live bird markets of the Northeast United States.</title>
        <authorList>
            <person name="Suarez D.L."/>
            <person name="Garcia M."/>
            <person name="Latimer J."/>
            <person name="Senne D."/>
            <person name="Perdue M."/>
        </authorList>
    </citation>
    <scope>NUCLEOTIDE SEQUENCE [GENOMIC RNA]</scope>
</reference>
<comment type="function">
    <text evidence="1">Plays critical roles in virus replication, from virus entry and uncoating to assembly and budding of the virus particle. M1 binding to ribonucleocapsids (RNPs) in nucleus seems to inhibit viral transcription. Interaction of viral NEP with M1-RNP is thought to promote nuclear export of the complex, which is targeted to the virion assembly site at the apical plasma membrane in polarized epithelial cells. Interactions with NA and HA may bring M1, a non-raft-associated protein, into lipid rafts. Forms a continuous shell on the inner side of the lipid bilayer in virion, where it binds the RNP. During virus entry into cell, the M2 ion channel acidifies the internal virion core, inducing M1 dissociation from the RNP. M1-free RNPs are transported to the nucleus, where viral transcription and replication can take place.</text>
</comment>
<comment type="function">
    <text evidence="1">Determines the virion's shape: spherical or filamentous. Clinical isolates of influenza are characterized by the presence of significant proportion of filamentous virions, whereas after multiple passage on eggs or cell culture, virions have only spherical morphology. Filamentous virions are thought to be important to infect neighboring cells, and spherical virions more suited to spread through aerosol between hosts organisms.</text>
</comment>
<comment type="subunit">
    <text evidence="1">Homodimer and homomultimer. Interacts with NEP. Binds ribonucleocapsid by both interacting with genomic RNA and NP protein. May interact with HA and NA. Cannot bind NP without genomic RNA.</text>
</comment>
<comment type="subcellular location">
    <subcellularLocation>
        <location evidence="1">Virion membrane</location>
        <topology evidence="1">Peripheral membrane protein</topology>
        <orientation evidence="1">Cytoplasmic side</orientation>
    </subcellularLocation>
    <subcellularLocation>
        <location evidence="1">Host nucleus</location>
    </subcellularLocation>
</comment>
<comment type="alternative products">
    <event type="alternative splicing"/>
    <isoform>
        <id>Q77W48-1</id>
        <name>M1</name>
        <sequence type="displayed"/>
    </isoform>
    <isoform>
        <id>Q77W49-1</id>
        <name>M2</name>
        <sequence type="external"/>
    </isoform>
    <text>Only the first 9 residues are shared by the 2 isoforms.</text>
</comment>
<comment type="miscellaneous">
    <text evidence="1">Most abundant protein in virion. When expressed alone can form virus-like particles in transfected cells.</text>
</comment>
<comment type="similarity">
    <text evidence="1">Belongs to the influenza viruses Matrix protein M1 family.</text>
</comment>
<evidence type="ECO:0000255" key="1">
    <source>
        <dbReference type="HAMAP-Rule" id="MF_04068"/>
    </source>
</evidence>